<reference key="1">
    <citation type="journal article" date="2006" name="Proc. Natl. Acad. Sci. U.S.A.">
        <title>Comparative genomics of the lactic acid bacteria.</title>
        <authorList>
            <person name="Makarova K.S."/>
            <person name="Slesarev A."/>
            <person name="Wolf Y.I."/>
            <person name="Sorokin A."/>
            <person name="Mirkin B."/>
            <person name="Koonin E.V."/>
            <person name="Pavlov A."/>
            <person name="Pavlova N."/>
            <person name="Karamychev V."/>
            <person name="Polouchine N."/>
            <person name="Shakhova V."/>
            <person name="Grigoriev I."/>
            <person name="Lou Y."/>
            <person name="Rohksar D."/>
            <person name="Lucas S."/>
            <person name="Huang K."/>
            <person name="Goodstein D.M."/>
            <person name="Hawkins T."/>
            <person name="Plengvidhya V."/>
            <person name="Welker D."/>
            <person name="Hughes J."/>
            <person name="Goh Y."/>
            <person name="Benson A."/>
            <person name="Baldwin K."/>
            <person name="Lee J.-H."/>
            <person name="Diaz-Muniz I."/>
            <person name="Dosti B."/>
            <person name="Smeianov V."/>
            <person name="Wechter W."/>
            <person name="Barabote R."/>
            <person name="Lorca G."/>
            <person name="Altermann E."/>
            <person name="Barrangou R."/>
            <person name="Ganesan B."/>
            <person name="Xie Y."/>
            <person name="Rawsthorne H."/>
            <person name="Tamir D."/>
            <person name="Parker C."/>
            <person name="Breidt F."/>
            <person name="Broadbent J.R."/>
            <person name="Hutkins R."/>
            <person name="O'Sullivan D."/>
            <person name="Steele J."/>
            <person name="Unlu G."/>
            <person name="Saier M.H. Jr."/>
            <person name="Klaenhammer T."/>
            <person name="Richardson P."/>
            <person name="Kozyavkin S."/>
            <person name="Weimer B.C."/>
            <person name="Mills D.A."/>
        </authorList>
    </citation>
    <scope>NUCLEOTIDE SEQUENCE [LARGE SCALE GENOMIC DNA]</scope>
    <source>
        <strain>ATCC BAA-365 / Lb-18</strain>
    </source>
</reference>
<comment type="function">
    <text evidence="1">Cell wall formation. Catalyzes the transfer of a GlcNAc subunit on undecaprenyl-pyrophosphoryl-MurNAc-pentapeptide (lipid intermediate I) to form undecaprenyl-pyrophosphoryl-MurNAc-(pentapeptide)GlcNAc (lipid intermediate II).</text>
</comment>
<comment type="catalytic activity">
    <reaction evidence="1">
        <text>Mur2Ac(oyl-L-Ala-gamma-D-Glu-L-Lys-D-Ala-D-Ala)-di-trans,octa-cis-undecaprenyl diphosphate + UDP-N-acetyl-alpha-D-glucosamine = beta-D-GlcNAc-(1-&gt;4)-Mur2Ac(oyl-L-Ala-gamma-D-Glu-L-Lys-D-Ala-D-Ala)-di-trans,octa-cis-undecaprenyl diphosphate + UDP + H(+)</text>
        <dbReference type="Rhea" id="RHEA:23192"/>
        <dbReference type="ChEBI" id="CHEBI:15378"/>
        <dbReference type="ChEBI" id="CHEBI:57705"/>
        <dbReference type="ChEBI" id="CHEBI:58223"/>
        <dbReference type="ChEBI" id="CHEBI:60032"/>
        <dbReference type="ChEBI" id="CHEBI:60033"/>
        <dbReference type="EC" id="2.4.1.227"/>
    </reaction>
</comment>
<comment type="pathway">
    <text evidence="1">Cell wall biogenesis; peptidoglycan biosynthesis.</text>
</comment>
<comment type="subcellular location">
    <subcellularLocation>
        <location evidence="1">Cell membrane</location>
        <topology evidence="1">Peripheral membrane protein</topology>
        <orientation evidence="1">Cytoplasmic side</orientation>
    </subcellularLocation>
</comment>
<comment type="similarity">
    <text evidence="1">Belongs to the glycosyltransferase 28 family. MurG subfamily.</text>
</comment>
<keyword id="KW-0131">Cell cycle</keyword>
<keyword id="KW-0132">Cell division</keyword>
<keyword id="KW-1003">Cell membrane</keyword>
<keyword id="KW-0133">Cell shape</keyword>
<keyword id="KW-0961">Cell wall biogenesis/degradation</keyword>
<keyword id="KW-0328">Glycosyltransferase</keyword>
<keyword id="KW-0472">Membrane</keyword>
<keyword id="KW-0573">Peptidoglycan synthesis</keyword>
<keyword id="KW-0808">Transferase</keyword>
<dbReference type="EC" id="2.4.1.227" evidence="1"/>
<dbReference type="EMBL" id="CP000412">
    <property type="protein sequence ID" value="ABJ58300.1"/>
    <property type="molecule type" value="Genomic_DNA"/>
</dbReference>
<dbReference type="RefSeq" id="WP_003619171.1">
    <property type="nucleotide sequence ID" value="NC_008529.1"/>
</dbReference>
<dbReference type="SMR" id="Q04B72"/>
<dbReference type="CAZy" id="GT28">
    <property type="family name" value="Glycosyltransferase Family 28"/>
</dbReference>
<dbReference type="KEGG" id="lbu:LBUL_0674"/>
<dbReference type="HOGENOM" id="CLU_037404_0_1_9"/>
<dbReference type="BioCyc" id="LDEL321956:LBUL_RS03215-MONOMER"/>
<dbReference type="UniPathway" id="UPA00219"/>
<dbReference type="GO" id="GO:0005886">
    <property type="term" value="C:plasma membrane"/>
    <property type="evidence" value="ECO:0007669"/>
    <property type="project" value="UniProtKB-SubCell"/>
</dbReference>
<dbReference type="GO" id="GO:0050511">
    <property type="term" value="F:undecaprenyldiphospho-muramoylpentapeptide beta-N-acetylglucosaminyltransferase activity"/>
    <property type="evidence" value="ECO:0007669"/>
    <property type="project" value="UniProtKB-UniRule"/>
</dbReference>
<dbReference type="GO" id="GO:0005975">
    <property type="term" value="P:carbohydrate metabolic process"/>
    <property type="evidence" value="ECO:0007669"/>
    <property type="project" value="InterPro"/>
</dbReference>
<dbReference type="GO" id="GO:0051301">
    <property type="term" value="P:cell division"/>
    <property type="evidence" value="ECO:0007669"/>
    <property type="project" value="UniProtKB-KW"/>
</dbReference>
<dbReference type="GO" id="GO:0071555">
    <property type="term" value="P:cell wall organization"/>
    <property type="evidence" value="ECO:0007669"/>
    <property type="project" value="UniProtKB-KW"/>
</dbReference>
<dbReference type="GO" id="GO:0030259">
    <property type="term" value="P:lipid glycosylation"/>
    <property type="evidence" value="ECO:0007669"/>
    <property type="project" value="UniProtKB-UniRule"/>
</dbReference>
<dbReference type="GO" id="GO:0009252">
    <property type="term" value="P:peptidoglycan biosynthetic process"/>
    <property type="evidence" value="ECO:0007669"/>
    <property type="project" value="UniProtKB-UniRule"/>
</dbReference>
<dbReference type="GO" id="GO:0008360">
    <property type="term" value="P:regulation of cell shape"/>
    <property type="evidence" value="ECO:0007669"/>
    <property type="project" value="UniProtKB-KW"/>
</dbReference>
<dbReference type="CDD" id="cd03785">
    <property type="entry name" value="GT28_MurG"/>
    <property type="match status" value="1"/>
</dbReference>
<dbReference type="Gene3D" id="3.40.50.2000">
    <property type="entry name" value="Glycogen Phosphorylase B"/>
    <property type="match status" value="2"/>
</dbReference>
<dbReference type="HAMAP" id="MF_00033">
    <property type="entry name" value="MurG"/>
    <property type="match status" value="1"/>
</dbReference>
<dbReference type="InterPro" id="IPR006009">
    <property type="entry name" value="GlcNAc_MurG"/>
</dbReference>
<dbReference type="InterPro" id="IPR007235">
    <property type="entry name" value="Glyco_trans_28_C"/>
</dbReference>
<dbReference type="InterPro" id="IPR004276">
    <property type="entry name" value="GlycoTrans_28_N"/>
</dbReference>
<dbReference type="NCBIfam" id="TIGR01133">
    <property type="entry name" value="murG"/>
    <property type="match status" value="1"/>
</dbReference>
<dbReference type="PANTHER" id="PTHR21015:SF22">
    <property type="entry name" value="GLYCOSYLTRANSFERASE"/>
    <property type="match status" value="1"/>
</dbReference>
<dbReference type="PANTHER" id="PTHR21015">
    <property type="entry name" value="UDP-N-ACETYLGLUCOSAMINE--N-ACETYLMURAMYL-(PENTAPEPTIDE) PYROPHOSPHORYL-UNDECAPRENOL N-ACETYLGLUCOSAMINE TRANSFERASE 1"/>
    <property type="match status" value="1"/>
</dbReference>
<dbReference type="Pfam" id="PF04101">
    <property type="entry name" value="Glyco_tran_28_C"/>
    <property type="match status" value="1"/>
</dbReference>
<dbReference type="Pfam" id="PF03033">
    <property type="entry name" value="Glyco_transf_28"/>
    <property type="match status" value="1"/>
</dbReference>
<dbReference type="SUPFAM" id="SSF53756">
    <property type="entry name" value="UDP-Glycosyltransferase/glycogen phosphorylase"/>
    <property type="match status" value="1"/>
</dbReference>
<organism>
    <name type="scientific">Lactobacillus delbrueckii subsp. bulgaricus (strain ATCC BAA-365 / Lb-18)</name>
    <dbReference type="NCBI Taxonomy" id="321956"/>
    <lineage>
        <taxon>Bacteria</taxon>
        <taxon>Bacillati</taxon>
        <taxon>Bacillota</taxon>
        <taxon>Bacilli</taxon>
        <taxon>Lactobacillales</taxon>
        <taxon>Lactobacillaceae</taxon>
        <taxon>Lactobacillus</taxon>
    </lineage>
</organism>
<feature type="chain" id="PRO_1000002661" description="UDP-N-acetylglucosamine--N-acetylmuramyl-(pentapeptide) pyrophosphoryl-undecaprenol N-acetylglucosamine transferase">
    <location>
        <begin position="1"/>
        <end position="370"/>
    </location>
</feature>
<feature type="binding site" evidence="1">
    <location>
        <begin position="10"/>
        <end position="12"/>
    </location>
    <ligand>
        <name>UDP-N-acetyl-alpha-D-glucosamine</name>
        <dbReference type="ChEBI" id="CHEBI:57705"/>
    </ligand>
</feature>
<feature type="binding site" evidence="1">
    <location>
        <position position="126"/>
    </location>
    <ligand>
        <name>UDP-N-acetyl-alpha-D-glucosamine</name>
        <dbReference type="ChEBI" id="CHEBI:57705"/>
    </ligand>
</feature>
<feature type="binding site" evidence="1">
    <location>
        <position position="200"/>
    </location>
    <ligand>
        <name>UDP-N-acetyl-alpha-D-glucosamine</name>
        <dbReference type="ChEBI" id="CHEBI:57705"/>
    </ligand>
</feature>
<feature type="binding site" evidence="1">
    <location>
        <position position="255"/>
    </location>
    <ligand>
        <name>UDP-N-acetyl-alpha-D-glucosamine</name>
        <dbReference type="ChEBI" id="CHEBI:57705"/>
    </ligand>
</feature>
<feature type="binding site" evidence="1">
    <location>
        <position position="300"/>
    </location>
    <ligand>
        <name>UDP-N-acetyl-alpha-D-glucosamine</name>
        <dbReference type="ChEBI" id="CHEBI:57705"/>
    </ligand>
</feature>
<evidence type="ECO:0000255" key="1">
    <source>
        <dbReference type="HAMAP-Rule" id="MF_00033"/>
    </source>
</evidence>
<sequence length="370" mass="40486">MRVIFSGGGTGGHIYPIMALIERLKEEGICQDDEILFVGTKKGLESKIVPAAGVNFKTIDIQGFDRKHLLNNVKTIQLFLKATKRAKEILADFQPDVVLGTGGYVSGAIVYEASKMKIPTMIHESNSVVGVANKFLGHYVDKICYTFDDAAKEFPEKKKLVKTGNPRSQQVLSLNAKPVDLAGDLGLNPKIPTVLVFGGSRGALAINRVMLKSLMELKKKPYQVIWATGTYYYDAIEKKLADVDYDDSIKVVPYIDNMPGLLPEMTCVVSRSGATSLAEFTALGVPVILIPSPNVTHNHQMKNAMDLEKAGAALVIAEDDLNENTFVSSIDHLLLDQSYDEKMRQASKALGVPDASDQVIKVMKEIAKKN</sequence>
<accession>Q04B72</accession>
<proteinExistence type="inferred from homology"/>
<protein>
    <recommendedName>
        <fullName evidence="1">UDP-N-acetylglucosamine--N-acetylmuramyl-(pentapeptide) pyrophosphoryl-undecaprenol N-acetylglucosamine transferase</fullName>
        <ecNumber evidence="1">2.4.1.227</ecNumber>
    </recommendedName>
    <alternativeName>
        <fullName evidence="1">Undecaprenyl-PP-MurNAc-pentapeptide-UDPGlcNAc GlcNAc transferase</fullName>
    </alternativeName>
</protein>
<gene>
    <name evidence="1" type="primary">murG</name>
    <name type="ordered locus">LBUL_0674</name>
</gene>
<name>MURG_LACDB</name>